<feature type="chain" id="PRO_0000357932" description="NADH-quinone oxidoreductase subunit D 1">
    <location>
        <begin position="1"/>
        <end position="404"/>
    </location>
</feature>
<sequence length="404" mass="45260">MEPLDRELDEAELDLPSEPMLLNMGPSHPAMHGTVRIVLELSGETINKADVQIGYLHRGFEKMCERGTWSQVFPYVDRLNYVSPMLNNVGFALAVEKMLGVTVPERCQYYRVILGELARICDHMICSGAMSMELGAFTPFLYLCRAREIFWEIFEEETGARLTHSFGRVGGMARPPTADFKAMVRVGLARVLALVNDAEKLILKNRIFLDRLDGVGQISQEDALALGWTGVVLRATGVPYDVRRANPYMVYDRFEFDVPVGTRGDNYDRFMCRQEEIRQAGRIIEQALEQMPDEGPINIDDPRIVLPPKEEVYTTIEATIQHFKIVMEGIKVPAGECYSYTEAGNGELGFYLVSDGSGTPYRVRIRPPCFATTQGLSQLITGLMIPDVVPTFGSLNMIGGECDH</sequence>
<dbReference type="EC" id="7.1.1.-" evidence="1"/>
<dbReference type="EMBL" id="AM746676">
    <property type="protein sequence ID" value="CAN90682.1"/>
    <property type="molecule type" value="Genomic_DNA"/>
</dbReference>
<dbReference type="RefSeq" id="WP_012233160.1">
    <property type="nucleotide sequence ID" value="NC_010162.1"/>
</dbReference>
<dbReference type="SMR" id="A9GUZ1"/>
<dbReference type="STRING" id="448385.sce0525"/>
<dbReference type="KEGG" id="scl:sce0525"/>
<dbReference type="eggNOG" id="COG0649">
    <property type="taxonomic scope" value="Bacteria"/>
</dbReference>
<dbReference type="HOGENOM" id="CLU_015134_1_2_7"/>
<dbReference type="OrthoDB" id="9801496at2"/>
<dbReference type="BioCyc" id="SCEL448385:SCE_RS02755-MONOMER"/>
<dbReference type="Proteomes" id="UP000002139">
    <property type="component" value="Chromosome"/>
</dbReference>
<dbReference type="GO" id="GO:0005886">
    <property type="term" value="C:plasma membrane"/>
    <property type="evidence" value="ECO:0007669"/>
    <property type="project" value="UniProtKB-SubCell"/>
</dbReference>
<dbReference type="GO" id="GO:0051287">
    <property type="term" value="F:NAD binding"/>
    <property type="evidence" value="ECO:0007669"/>
    <property type="project" value="InterPro"/>
</dbReference>
<dbReference type="GO" id="GO:0050136">
    <property type="term" value="F:NADH:ubiquinone reductase (non-electrogenic) activity"/>
    <property type="evidence" value="ECO:0007669"/>
    <property type="project" value="UniProtKB-UniRule"/>
</dbReference>
<dbReference type="GO" id="GO:0048038">
    <property type="term" value="F:quinone binding"/>
    <property type="evidence" value="ECO:0007669"/>
    <property type="project" value="UniProtKB-KW"/>
</dbReference>
<dbReference type="Gene3D" id="1.10.645.10">
    <property type="entry name" value="Cytochrome-c3 Hydrogenase, chain B"/>
    <property type="match status" value="1"/>
</dbReference>
<dbReference type="HAMAP" id="MF_01358">
    <property type="entry name" value="NDH1_NuoD"/>
    <property type="match status" value="1"/>
</dbReference>
<dbReference type="InterPro" id="IPR001135">
    <property type="entry name" value="NADH_Q_OxRdtase_suD"/>
</dbReference>
<dbReference type="InterPro" id="IPR022885">
    <property type="entry name" value="NDH1_su_D/H"/>
</dbReference>
<dbReference type="InterPro" id="IPR029014">
    <property type="entry name" value="NiFe-Hase_large"/>
</dbReference>
<dbReference type="NCBIfam" id="TIGR01962">
    <property type="entry name" value="NuoD"/>
    <property type="match status" value="1"/>
</dbReference>
<dbReference type="NCBIfam" id="NF004739">
    <property type="entry name" value="PRK06075.1"/>
    <property type="match status" value="1"/>
</dbReference>
<dbReference type="PANTHER" id="PTHR11993:SF10">
    <property type="entry name" value="NADH DEHYDROGENASE [UBIQUINONE] IRON-SULFUR PROTEIN 2, MITOCHONDRIAL"/>
    <property type="match status" value="1"/>
</dbReference>
<dbReference type="PANTHER" id="PTHR11993">
    <property type="entry name" value="NADH-UBIQUINONE OXIDOREDUCTASE 49 KDA SUBUNIT"/>
    <property type="match status" value="1"/>
</dbReference>
<dbReference type="Pfam" id="PF00346">
    <property type="entry name" value="Complex1_49kDa"/>
    <property type="match status" value="1"/>
</dbReference>
<dbReference type="SUPFAM" id="SSF56762">
    <property type="entry name" value="HydB/Nqo4-like"/>
    <property type="match status" value="1"/>
</dbReference>
<keyword id="KW-0997">Cell inner membrane</keyword>
<keyword id="KW-1003">Cell membrane</keyword>
<keyword id="KW-0472">Membrane</keyword>
<keyword id="KW-0520">NAD</keyword>
<keyword id="KW-0874">Quinone</keyword>
<keyword id="KW-1185">Reference proteome</keyword>
<keyword id="KW-1278">Translocase</keyword>
<keyword id="KW-0813">Transport</keyword>
<keyword id="KW-0830">Ubiquinone</keyword>
<gene>
    <name evidence="1" type="primary">nuoD1</name>
    <name type="ordered locus">sce0525</name>
</gene>
<proteinExistence type="inferred from homology"/>
<protein>
    <recommendedName>
        <fullName evidence="1">NADH-quinone oxidoreductase subunit D 1</fullName>
        <ecNumber evidence="1">7.1.1.-</ecNumber>
    </recommendedName>
    <alternativeName>
        <fullName evidence="1">NADH dehydrogenase I subunit D 1</fullName>
    </alternativeName>
    <alternativeName>
        <fullName evidence="1">NDH-1 subunit D 1</fullName>
    </alternativeName>
</protein>
<name>NUOD1_SORC5</name>
<accession>A9GUZ1</accession>
<comment type="function">
    <text evidence="1">NDH-1 shuttles electrons from NADH, via FMN and iron-sulfur (Fe-S) centers, to quinones in the respiratory chain. The immediate electron acceptor for the enzyme in this species is believed to be ubiquinone. Couples the redox reaction to proton translocation (for every two electrons transferred, four hydrogen ions are translocated across the cytoplasmic membrane), and thus conserves the redox energy in a proton gradient.</text>
</comment>
<comment type="catalytic activity">
    <reaction evidence="1">
        <text>a quinone + NADH + 5 H(+)(in) = a quinol + NAD(+) + 4 H(+)(out)</text>
        <dbReference type="Rhea" id="RHEA:57888"/>
        <dbReference type="ChEBI" id="CHEBI:15378"/>
        <dbReference type="ChEBI" id="CHEBI:24646"/>
        <dbReference type="ChEBI" id="CHEBI:57540"/>
        <dbReference type="ChEBI" id="CHEBI:57945"/>
        <dbReference type="ChEBI" id="CHEBI:132124"/>
    </reaction>
</comment>
<comment type="subunit">
    <text evidence="1">NDH-1 is composed of 14 different subunits. Subunits NuoB, C, D, E, F, and G constitute the peripheral sector of the complex.</text>
</comment>
<comment type="subcellular location">
    <subcellularLocation>
        <location evidence="1">Cell inner membrane</location>
        <topology evidence="1">Peripheral membrane protein</topology>
        <orientation evidence="1">Cytoplasmic side</orientation>
    </subcellularLocation>
</comment>
<comment type="similarity">
    <text evidence="1">Belongs to the complex I 49 kDa subunit family.</text>
</comment>
<reference key="1">
    <citation type="journal article" date="2007" name="Nat. Biotechnol.">
        <title>Complete genome sequence of the myxobacterium Sorangium cellulosum.</title>
        <authorList>
            <person name="Schneiker S."/>
            <person name="Perlova O."/>
            <person name="Kaiser O."/>
            <person name="Gerth K."/>
            <person name="Alici A."/>
            <person name="Altmeyer M.O."/>
            <person name="Bartels D."/>
            <person name="Bekel T."/>
            <person name="Beyer S."/>
            <person name="Bode E."/>
            <person name="Bode H.B."/>
            <person name="Bolten C.J."/>
            <person name="Choudhuri J.V."/>
            <person name="Doss S."/>
            <person name="Elnakady Y.A."/>
            <person name="Frank B."/>
            <person name="Gaigalat L."/>
            <person name="Goesmann A."/>
            <person name="Groeger C."/>
            <person name="Gross F."/>
            <person name="Jelsbak L."/>
            <person name="Jelsbak L."/>
            <person name="Kalinowski J."/>
            <person name="Kegler C."/>
            <person name="Knauber T."/>
            <person name="Konietzny S."/>
            <person name="Kopp M."/>
            <person name="Krause L."/>
            <person name="Krug D."/>
            <person name="Linke B."/>
            <person name="Mahmud T."/>
            <person name="Martinez-Arias R."/>
            <person name="McHardy A.C."/>
            <person name="Merai M."/>
            <person name="Meyer F."/>
            <person name="Mormann S."/>
            <person name="Munoz-Dorado J."/>
            <person name="Perez J."/>
            <person name="Pradella S."/>
            <person name="Rachid S."/>
            <person name="Raddatz G."/>
            <person name="Rosenau F."/>
            <person name="Rueckert C."/>
            <person name="Sasse F."/>
            <person name="Scharfe M."/>
            <person name="Schuster S.C."/>
            <person name="Suen G."/>
            <person name="Treuner-Lange A."/>
            <person name="Velicer G.J."/>
            <person name="Vorholter F.-J."/>
            <person name="Weissman K.J."/>
            <person name="Welch R.D."/>
            <person name="Wenzel S.C."/>
            <person name="Whitworth D.E."/>
            <person name="Wilhelm S."/>
            <person name="Wittmann C."/>
            <person name="Bloecker H."/>
            <person name="Puehler A."/>
            <person name="Mueller R."/>
        </authorList>
    </citation>
    <scope>NUCLEOTIDE SEQUENCE [LARGE SCALE GENOMIC DNA]</scope>
    <source>
        <strain>So ce56</strain>
    </source>
</reference>
<evidence type="ECO:0000255" key="1">
    <source>
        <dbReference type="HAMAP-Rule" id="MF_01358"/>
    </source>
</evidence>
<organism>
    <name type="scientific">Sorangium cellulosum (strain So ce56)</name>
    <name type="common">Polyangium cellulosum (strain So ce56)</name>
    <dbReference type="NCBI Taxonomy" id="448385"/>
    <lineage>
        <taxon>Bacteria</taxon>
        <taxon>Pseudomonadati</taxon>
        <taxon>Myxococcota</taxon>
        <taxon>Polyangia</taxon>
        <taxon>Polyangiales</taxon>
        <taxon>Polyangiaceae</taxon>
        <taxon>Sorangium</taxon>
    </lineage>
</organism>